<proteinExistence type="inferred from homology"/>
<feature type="chain" id="PRO_0000179636" description="ATP-dependent Clp protease proteolytic subunit 1">
    <location>
        <begin position="1"/>
        <end position="227"/>
    </location>
</feature>
<feature type="active site" description="Nucleophile" evidence="1">
    <location>
        <position position="124"/>
    </location>
</feature>
<feature type="active site" evidence="1">
    <location>
        <position position="149"/>
    </location>
</feature>
<gene>
    <name evidence="1" type="primary">clpP1</name>
    <name type="ordered locus">RB10826</name>
</gene>
<dbReference type="EC" id="3.4.21.92" evidence="1"/>
<dbReference type="EMBL" id="BX294152">
    <property type="protein sequence ID" value="CAD77014.1"/>
    <property type="molecule type" value="Genomic_DNA"/>
</dbReference>
<dbReference type="RefSeq" id="NP_869636.1">
    <property type="nucleotide sequence ID" value="NC_005027.1"/>
</dbReference>
<dbReference type="SMR" id="Q7UK67"/>
<dbReference type="STRING" id="243090.RB10826"/>
<dbReference type="EnsemblBacteria" id="CAD77014">
    <property type="protein sequence ID" value="CAD77014"/>
    <property type="gene ID" value="RB10826"/>
</dbReference>
<dbReference type="KEGG" id="rba:RB10826"/>
<dbReference type="PATRIC" id="fig|243090.15.peg.5226"/>
<dbReference type="eggNOG" id="COG0740">
    <property type="taxonomic scope" value="Bacteria"/>
</dbReference>
<dbReference type="HOGENOM" id="CLU_058707_3_3_0"/>
<dbReference type="InParanoid" id="Q7UK67"/>
<dbReference type="OrthoDB" id="9802800at2"/>
<dbReference type="Proteomes" id="UP000001025">
    <property type="component" value="Chromosome"/>
</dbReference>
<dbReference type="GO" id="GO:0005737">
    <property type="term" value="C:cytoplasm"/>
    <property type="evidence" value="ECO:0007669"/>
    <property type="project" value="UniProtKB-SubCell"/>
</dbReference>
<dbReference type="GO" id="GO:0009368">
    <property type="term" value="C:endopeptidase Clp complex"/>
    <property type="evidence" value="ECO:0000318"/>
    <property type="project" value="GO_Central"/>
</dbReference>
<dbReference type="GO" id="GO:0004176">
    <property type="term" value="F:ATP-dependent peptidase activity"/>
    <property type="evidence" value="ECO:0000318"/>
    <property type="project" value="GO_Central"/>
</dbReference>
<dbReference type="GO" id="GO:0051117">
    <property type="term" value="F:ATPase binding"/>
    <property type="evidence" value="ECO:0000318"/>
    <property type="project" value="GO_Central"/>
</dbReference>
<dbReference type="GO" id="GO:0004252">
    <property type="term" value="F:serine-type endopeptidase activity"/>
    <property type="evidence" value="ECO:0000318"/>
    <property type="project" value="GO_Central"/>
</dbReference>
<dbReference type="GO" id="GO:0006515">
    <property type="term" value="P:protein quality control for misfolded or incompletely synthesized proteins"/>
    <property type="evidence" value="ECO:0000318"/>
    <property type="project" value="GO_Central"/>
</dbReference>
<dbReference type="CDD" id="cd07017">
    <property type="entry name" value="S14_ClpP_2"/>
    <property type="match status" value="1"/>
</dbReference>
<dbReference type="FunFam" id="3.90.226.10:FF:000002">
    <property type="entry name" value="ATP-dependent Clp protease proteolytic subunit"/>
    <property type="match status" value="1"/>
</dbReference>
<dbReference type="Gene3D" id="3.90.226.10">
    <property type="entry name" value="2-enoyl-CoA Hydratase, Chain A, domain 1"/>
    <property type="match status" value="1"/>
</dbReference>
<dbReference type="HAMAP" id="MF_00444">
    <property type="entry name" value="ClpP"/>
    <property type="match status" value="1"/>
</dbReference>
<dbReference type="InterPro" id="IPR001907">
    <property type="entry name" value="ClpP"/>
</dbReference>
<dbReference type="InterPro" id="IPR029045">
    <property type="entry name" value="ClpP/crotonase-like_dom_sf"/>
</dbReference>
<dbReference type="InterPro" id="IPR023562">
    <property type="entry name" value="ClpP/TepA"/>
</dbReference>
<dbReference type="InterPro" id="IPR033135">
    <property type="entry name" value="ClpP_His_AS"/>
</dbReference>
<dbReference type="NCBIfam" id="NF001368">
    <property type="entry name" value="PRK00277.1"/>
    <property type="match status" value="1"/>
</dbReference>
<dbReference type="NCBIfam" id="NF009205">
    <property type="entry name" value="PRK12553.1"/>
    <property type="match status" value="1"/>
</dbReference>
<dbReference type="PANTHER" id="PTHR10381">
    <property type="entry name" value="ATP-DEPENDENT CLP PROTEASE PROTEOLYTIC SUBUNIT"/>
    <property type="match status" value="1"/>
</dbReference>
<dbReference type="PANTHER" id="PTHR10381:SF70">
    <property type="entry name" value="ATP-DEPENDENT CLP PROTEASE PROTEOLYTIC SUBUNIT"/>
    <property type="match status" value="1"/>
</dbReference>
<dbReference type="Pfam" id="PF00574">
    <property type="entry name" value="CLP_protease"/>
    <property type="match status" value="1"/>
</dbReference>
<dbReference type="PRINTS" id="PR00127">
    <property type="entry name" value="CLPPROTEASEP"/>
</dbReference>
<dbReference type="SUPFAM" id="SSF52096">
    <property type="entry name" value="ClpP/crotonase"/>
    <property type="match status" value="1"/>
</dbReference>
<dbReference type="PROSITE" id="PS00382">
    <property type="entry name" value="CLP_PROTEASE_HIS"/>
    <property type="match status" value="1"/>
</dbReference>
<comment type="function">
    <text evidence="1">Cleaves peptides in various proteins in a process that requires ATP hydrolysis. Has a chymotrypsin-like activity. Plays a major role in the degradation of misfolded proteins.</text>
</comment>
<comment type="catalytic activity">
    <reaction evidence="1">
        <text>Hydrolysis of proteins to small peptides in the presence of ATP and magnesium. alpha-casein is the usual test substrate. In the absence of ATP, only oligopeptides shorter than five residues are hydrolyzed (such as succinyl-Leu-Tyr-|-NHMec, and Leu-Tyr-Leu-|-Tyr-Trp, in which cleavage of the -Tyr-|-Leu- and -Tyr-|-Trp bonds also occurs).</text>
        <dbReference type="EC" id="3.4.21.92"/>
    </reaction>
</comment>
<comment type="subunit">
    <text evidence="1">Fourteen ClpP subunits assemble into 2 heptameric rings which stack back to back to give a disk-like structure with a central cavity, resembling the structure of eukaryotic proteasomes.</text>
</comment>
<comment type="subcellular location">
    <subcellularLocation>
        <location evidence="1">Cytoplasm</location>
    </subcellularLocation>
</comment>
<comment type="similarity">
    <text evidence="1">Belongs to the peptidase S14 family.</text>
</comment>
<protein>
    <recommendedName>
        <fullName evidence="1">ATP-dependent Clp protease proteolytic subunit 1</fullName>
        <ecNumber evidence="1">3.4.21.92</ecNumber>
    </recommendedName>
    <alternativeName>
        <fullName evidence="1">Endopeptidase Clp 1</fullName>
    </alternativeName>
</protein>
<keyword id="KW-0963">Cytoplasm</keyword>
<keyword id="KW-0378">Hydrolase</keyword>
<keyword id="KW-0645">Protease</keyword>
<keyword id="KW-1185">Reference proteome</keyword>
<keyword id="KW-0720">Serine protease</keyword>
<accession>Q7UK67</accession>
<sequence>MSDPFGSPFPSLHDQNLNAQHAMASDHRLANAASYQSYQRQRQMTLGDLLLENRIVFMQGEIHYANANEIVMKLLYLQSENRRKDIHLYINSPGGSVTATLAIYDTMQMLSCPVATYCVGEACSGAAVLLIGGAKGKRFCLPNSRVMMHQPLGGVSGQVSDIEIQAAEMFRYRDKLNEIISSHCGKSVEQIAKDTDRDFFLDAQQAKEYGLVDDLLLGTPASEEDED</sequence>
<organism>
    <name type="scientific">Rhodopirellula baltica (strain DSM 10527 / NCIMB 13988 / SH1)</name>
    <dbReference type="NCBI Taxonomy" id="243090"/>
    <lineage>
        <taxon>Bacteria</taxon>
        <taxon>Pseudomonadati</taxon>
        <taxon>Planctomycetota</taxon>
        <taxon>Planctomycetia</taxon>
        <taxon>Pirellulales</taxon>
        <taxon>Pirellulaceae</taxon>
        <taxon>Rhodopirellula</taxon>
    </lineage>
</organism>
<reference key="1">
    <citation type="journal article" date="2003" name="Proc. Natl. Acad. Sci. U.S.A.">
        <title>Complete genome sequence of the marine planctomycete Pirellula sp. strain 1.</title>
        <authorList>
            <person name="Gloeckner F.O."/>
            <person name="Kube M."/>
            <person name="Bauer M."/>
            <person name="Teeling H."/>
            <person name="Lombardot T."/>
            <person name="Ludwig W."/>
            <person name="Gade D."/>
            <person name="Beck A."/>
            <person name="Borzym K."/>
            <person name="Heitmann K."/>
            <person name="Rabus R."/>
            <person name="Schlesner H."/>
            <person name="Amann R."/>
            <person name="Reinhardt R."/>
        </authorList>
    </citation>
    <scope>NUCLEOTIDE SEQUENCE [LARGE SCALE GENOMIC DNA]</scope>
    <source>
        <strain>DSM 10527 / NCIMB 13988 / SH1</strain>
    </source>
</reference>
<evidence type="ECO:0000255" key="1">
    <source>
        <dbReference type="HAMAP-Rule" id="MF_00444"/>
    </source>
</evidence>
<name>CLPP1_RHOBA</name>